<comment type="function">
    <text evidence="1">Modulates cytoplasmic dynein binding to an organelle, and plays a role in prometaphase chromosome alignment and spindle organization during mitosis.</text>
</comment>
<comment type="subunit">
    <text evidence="2">Subunit of dynactin, a multiprotein complex associated with dynein.</text>
</comment>
<comment type="subcellular location">
    <subcellularLocation>
        <location evidence="1">Cytoplasm</location>
        <location evidence="1">Cytoskeleton</location>
    </subcellularLocation>
    <subcellularLocation>
        <location evidence="2">Membrane</location>
        <topology evidence="2">Peripheral membrane protein</topology>
    </subcellularLocation>
</comment>
<comment type="similarity">
    <text evidence="4">Belongs to the dynactin subunit 2 family.</text>
</comment>
<dbReference type="EMBL" id="DQ440492">
    <property type="protein sequence ID" value="ABF18525.1"/>
    <property type="molecule type" value="mRNA"/>
</dbReference>
<dbReference type="EMBL" id="CH477371">
    <property type="protein sequence ID" value="EAT42431.1"/>
    <property type="molecule type" value="Genomic_DNA"/>
</dbReference>
<dbReference type="RefSeq" id="XP_001657375.1">
    <property type="nucleotide sequence ID" value="XM_001657325.1"/>
</dbReference>
<dbReference type="SMR" id="Q1HQF2"/>
<dbReference type="FunCoup" id="Q1HQF2">
    <property type="interactions" value="1346"/>
</dbReference>
<dbReference type="STRING" id="7159.Q1HQF2"/>
<dbReference type="PaxDb" id="7159-AAEL006029-PA"/>
<dbReference type="VEuPathDB" id="VectorBase:AAEL020113"/>
<dbReference type="eggNOG" id="KOG3958">
    <property type="taxonomic scope" value="Eukaryota"/>
</dbReference>
<dbReference type="HOGENOM" id="CLU_049964_1_0_1"/>
<dbReference type="InParanoid" id="Q1HQF2"/>
<dbReference type="OMA" id="YKFGDWE"/>
<dbReference type="PhylomeDB" id="Q1HQF2"/>
<dbReference type="Proteomes" id="UP000008820">
    <property type="component" value="Unassembled WGS sequence"/>
</dbReference>
<dbReference type="Proteomes" id="UP000682892">
    <property type="component" value="Unassembled WGS sequence"/>
</dbReference>
<dbReference type="GO" id="GO:0005737">
    <property type="term" value="C:cytoplasm"/>
    <property type="evidence" value="ECO:0007669"/>
    <property type="project" value="UniProtKB-KW"/>
</dbReference>
<dbReference type="GO" id="GO:0005869">
    <property type="term" value="C:dynactin complex"/>
    <property type="evidence" value="ECO:0000250"/>
    <property type="project" value="UniProtKB"/>
</dbReference>
<dbReference type="GO" id="GO:0030286">
    <property type="term" value="C:dynein complex"/>
    <property type="evidence" value="ECO:0007669"/>
    <property type="project" value="UniProtKB-KW"/>
</dbReference>
<dbReference type="GO" id="GO:0016020">
    <property type="term" value="C:membrane"/>
    <property type="evidence" value="ECO:0007669"/>
    <property type="project" value="UniProtKB-SubCell"/>
</dbReference>
<dbReference type="GO" id="GO:0005874">
    <property type="term" value="C:microtubule"/>
    <property type="evidence" value="ECO:0007669"/>
    <property type="project" value="UniProtKB-KW"/>
</dbReference>
<dbReference type="GO" id="GO:0031982">
    <property type="term" value="C:vesicle"/>
    <property type="evidence" value="ECO:0000250"/>
    <property type="project" value="UniProtKB"/>
</dbReference>
<dbReference type="GO" id="GO:0007080">
    <property type="term" value="P:mitotic metaphase chromosome alignment"/>
    <property type="evidence" value="ECO:0000250"/>
    <property type="project" value="UniProtKB"/>
</dbReference>
<dbReference type="GO" id="GO:0007052">
    <property type="term" value="P:mitotic spindle organization"/>
    <property type="evidence" value="ECO:0000250"/>
    <property type="project" value="UniProtKB"/>
</dbReference>
<dbReference type="InterPro" id="IPR028133">
    <property type="entry name" value="Dynamitin"/>
</dbReference>
<dbReference type="PANTHER" id="PTHR15346">
    <property type="entry name" value="DYNACTIN SUBUNIT"/>
    <property type="match status" value="1"/>
</dbReference>
<dbReference type="Pfam" id="PF04912">
    <property type="entry name" value="Dynamitin"/>
    <property type="match status" value="1"/>
</dbReference>
<evidence type="ECO:0000250" key="1"/>
<evidence type="ECO:0000250" key="2">
    <source>
        <dbReference type="UniProtKB" id="Q13561"/>
    </source>
</evidence>
<evidence type="ECO:0000250" key="3">
    <source>
        <dbReference type="UniProtKB" id="Q7K2D2"/>
    </source>
</evidence>
<evidence type="ECO:0000255" key="4"/>
<evidence type="ECO:0000256" key="5">
    <source>
        <dbReference type="SAM" id="MobiDB-lite"/>
    </source>
</evidence>
<evidence type="ECO:0000305" key="6"/>
<evidence type="ECO:0000312" key="7">
    <source>
        <dbReference type="EMBL" id="ABF18525.1"/>
    </source>
</evidence>
<evidence type="ECO:0000312" key="8">
    <source>
        <dbReference type="EMBL" id="EAT42431.1"/>
    </source>
</evidence>
<sequence>MADPKFQFLPYIAHDQPDVYETPDAPESETSDFYDEEPANESIERLHISTKDSYNKFKGKYLTGNVDFSDRIGKKIRNGYDAVSGEWDLAGEGEKETPIQKCLRLQCEMNELMEEITASQADATKTKEEKASYEAVFDVVGTAKKVLESLKLEQAIGSETVAMGAETEAKKLLTKIEEYKKSVGADPAKTATELVYSSRIAELEHRLHELEVAVGAKPEKISRLAGSAGAGNLIEAVQSISAKAALLQPQQLDLIETRLGNLLLKMAAIDEKSAATGQDANREQKILELYEIAKTTEPIVQILPDMLNRMQTLESLHKYATNFSKLFAELETTQASILKGIASNKTLLTGVQEAFAQNLENVNKEVKKLDERMKTLQEKVK</sequence>
<name>DCTN2_AEDAE</name>
<feature type="chain" id="PRO_0000306373" description="Dynactin subunit 2">
    <location>
        <begin position="1"/>
        <end position="381"/>
    </location>
</feature>
<feature type="region of interest" description="Disordered" evidence="5">
    <location>
        <begin position="15"/>
        <end position="39"/>
    </location>
</feature>
<feature type="coiled-coil region" evidence="4">
    <location>
        <begin position="100"/>
        <end position="216"/>
    </location>
</feature>
<feature type="coiled-coil region" evidence="4">
    <location>
        <begin position="350"/>
        <end position="381"/>
    </location>
</feature>
<feature type="compositionally biased region" description="Acidic residues" evidence="5">
    <location>
        <begin position="24"/>
        <end position="39"/>
    </location>
</feature>
<feature type="sequence conflict" description="In Ref. 1; ABF18525." evidence="6" ref="1">
    <original>V</original>
    <variation>G</variation>
    <location>
        <position position="183"/>
    </location>
</feature>
<accession>Q1HQF2</accession>
<accession>Q177T7</accession>
<proteinExistence type="evidence at transcript level"/>
<gene>
    <name evidence="3" type="primary">DCTN2-p50</name>
    <name evidence="3" type="synonym">Dmn</name>
    <name type="ORF">AAEL006029</name>
</gene>
<organism>
    <name type="scientific">Aedes aegypti</name>
    <name type="common">Yellowfever mosquito</name>
    <name type="synonym">Culex aegypti</name>
    <dbReference type="NCBI Taxonomy" id="7159"/>
    <lineage>
        <taxon>Eukaryota</taxon>
        <taxon>Metazoa</taxon>
        <taxon>Ecdysozoa</taxon>
        <taxon>Arthropoda</taxon>
        <taxon>Hexapoda</taxon>
        <taxon>Insecta</taxon>
        <taxon>Pterygota</taxon>
        <taxon>Neoptera</taxon>
        <taxon>Endopterygota</taxon>
        <taxon>Diptera</taxon>
        <taxon>Nematocera</taxon>
        <taxon>Culicoidea</taxon>
        <taxon>Culicidae</taxon>
        <taxon>Culicinae</taxon>
        <taxon>Aedini</taxon>
        <taxon>Aedes</taxon>
        <taxon>Stegomyia</taxon>
    </lineage>
</organism>
<protein>
    <recommendedName>
        <fullName>Dynactin subunit 2</fullName>
    </recommendedName>
    <alternativeName>
        <fullName evidence="3">Dynactin 2 p50 subunit</fullName>
    </alternativeName>
</protein>
<reference evidence="7" key="1">
    <citation type="journal article" date="2007" name="BMC Genomics">
        <title>An annotated catalogue of salivary gland transcripts in the adult female mosquito, Aedes aegypti.</title>
        <authorList>
            <person name="Ribeiro J.M.C."/>
            <person name="Arca B."/>
            <person name="Lombardo F."/>
            <person name="Calvo E."/>
            <person name="Phan V.M."/>
            <person name="Chandra P.K."/>
            <person name="Wikel S.K."/>
        </authorList>
    </citation>
    <scope>NUCLEOTIDE SEQUENCE [LARGE SCALE MRNA]</scope>
    <source>
        <strain>Black-eyed Liverpool</strain>
        <tissue>Salivary gland</tissue>
    </source>
</reference>
<reference evidence="8" key="2">
    <citation type="journal article" date="2007" name="Science">
        <title>Genome sequence of Aedes aegypti, a major arbovirus vector.</title>
        <authorList>
            <person name="Nene V."/>
            <person name="Wortman J.R."/>
            <person name="Lawson D."/>
            <person name="Haas B.J."/>
            <person name="Kodira C.D."/>
            <person name="Tu Z.J."/>
            <person name="Loftus B.J."/>
            <person name="Xi Z."/>
            <person name="Megy K."/>
            <person name="Grabherr M."/>
            <person name="Ren Q."/>
            <person name="Zdobnov E.M."/>
            <person name="Lobo N.F."/>
            <person name="Campbell K.S."/>
            <person name="Brown S.E."/>
            <person name="Bonaldo M.F."/>
            <person name="Zhu J."/>
            <person name="Sinkins S.P."/>
            <person name="Hogenkamp D.G."/>
            <person name="Amedeo P."/>
            <person name="Arensburger P."/>
            <person name="Atkinson P.W."/>
            <person name="Bidwell S.L."/>
            <person name="Biedler J."/>
            <person name="Birney E."/>
            <person name="Bruggner R.V."/>
            <person name="Costas J."/>
            <person name="Coy M.R."/>
            <person name="Crabtree J."/>
            <person name="Crawford M."/>
            <person name="DeBruyn B."/>
            <person name="DeCaprio D."/>
            <person name="Eiglmeier K."/>
            <person name="Eisenstadt E."/>
            <person name="El-Dorry H."/>
            <person name="Gelbart W.M."/>
            <person name="Gomes S.L."/>
            <person name="Hammond M."/>
            <person name="Hannick L.I."/>
            <person name="Hogan J.R."/>
            <person name="Holmes M.H."/>
            <person name="Jaffe D."/>
            <person name="Johnston S.J."/>
            <person name="Kennedy R.C."/>
            <person name="Koo H."/>
            <person name="Kravitz S."/>
            <person name="Kriventseva E.V."/>
            <person name="Kulp D."/>
            <person name="Labutti K."/>
            <person name="Lee E."/>
            <person name="Li S."/>
            <person name="Lovin D.D."/>
            <person name="Mao C."/>
            <person name="Mauceli E."/>
            <person name="Menck C.F."/>
            <person name="Miller J.R."/>
            <person name="Montgomery P."/>
            <person name="Mori A."/>
            <person name="Nascimento A.L."/>
            <person name="Naveira H.F."/>
            <person name="Nusbaum C."/>
            <person name="O'Leary S.B."/>
            <person name="Orvis J."/>
            <person name="Pertea M."/>
            <person name="Quesneville H."/>
            <person name="Reidenbach K.R."/>
            <person name="Rogers Y.-H.C."/>
            <person name="Roth C.W."/>
            <person name="Schneider J.R."/>
            <person name="Schatz M."/>
            <person name="Shumway M."/>
            <person name="Stanke M."/>
            <person name="Stinson E.O."/>
            <person name="Tubio J.M.C."/>
            <person name="Vanzee J.P."/>
            <person name="Verjovski-Almeida S."/>
            <person name="Werner D."/>
            <person name="White O.R."/>
            <person name="Wyder S."/>
            <person name="Zeng Q."/>
            <person name="Zhao Q."/>
            <person name="Zhao Y."/>
            <person name="Hill C.A."/>
            <person name="Raikhel A.S."/>
            <person name="Soares M.B."/>
            <person name="Knudson D.L."/>
            <person name="Lee N.H."/>
            <person name="Galagan J."/>
            <person name="Salzberg S.L."/>
            <person name="Paulsen I.T."/>
            <person name="Dimopoulos G."/>
            <person name="Collins F.H."/>
            <person name="Bruce B."/>
            <person name="Fraser-Liggett C.M."/>
            <person name="Severson D.W."/>
        </authorList>
    </citation>
    <scope>NUCLEOTIDE SEQUENCE [LARGE SCALE GENOMIC DNA]</scope>
    <source>
        <strain>LVPib12</strain>
    </source>
</reference>
<keyword id="KW-0175">Coiled coil</keyword>
<keyword id="KW-0963">Cytoplasm</keyword>
<keyword id="KW-0206">Cytoskeleton</keyword>
<keyword id="KW-0243">Dynein</keyword>
<keyword id="KW-0472">Membrane</keyword>
<keyword id="KW-0493">Microtubule</keyword>
<keyword id="KW-1185">Reference proteome</keyword>